<feature type="chain" id="PRO_0000132355" description="Small ribosomal subunit protein uS4">
    <location>
        <begin position="1"/>
        <end position="206"/>
    </location>
</feature>
<feature type="domain" description="S4 RNA-binding" evidence="1">
    <location>
        <begin position="96"/>
        <end position="156"/>
    </location>
</feature>
<reference key="1">
    <citation type="journal article" date="2003" name="Proc. Natl. Acad. Sci. U.S.A.">
        <title>Reductive genome evolution in Buchnera aphidicola.</title>
        <authorList>
            <person name="van Ham R.C.H.J."/>
            <person name="Kamerbeek J."/>
            <person name="Palacios C."/>
            <person name="Rausell C."/>
            <person name="Abascal F."/>
            <person name="Bastolla U."/>
            <person name="Fernandez J.M."/>
            <person name="Jimenez L."/>
            <person name="Postigo M."/>
            <person name="Silva F.J."/>
            <person name="Tamames J."/>
            <person name="Viguera E."/>
            <person name="Latorre A."/>
            <person name="Valencia A."/>
            <person name="Moran F."/>
            <person name="Moya A."/>
        </authorList>
    </citation>
    <scope>NUCLEOTIDE SEQUENCE [LARGE SCALE GENOMIC DNA]</scope>
    <source>
        <strain>Bp</strain>
    </source>
</reference>
<name>RS4_BUCBP</name>
<gene>
    <name evidence="1" type="primary">rpsD</name>
    <name type="ordered locus">bbp_443</name>
</gene>
<sequence>MAKYLGPKLKLCRRENTDLFFKSGIRAIDSKCKFDQFPGQHGSKRQRLSDYGVQLREKQKVRRLYGILEAQFRNYYKHASRLKGNTGENLLFLLENRLDNVTYRIGFGSTRAEARQLVSHKSILVNNCTVNIPSYQVSPGDVISIHKNSKLQSRIKAALELSEQRETPIWIEVDFNKMQGIYKRVPERSDLSAEINEYLIIELYSK</sequence>
<protein>
    <recommendedName>
        <fullName evidence="1">Small ribosomal subunit protein uS4</fullName>
    </recommendedName>
    <alternativeName>
        <fullName evidence="2">30S ribosomal protein S4</fullName>
    </alternativeName>
</protein>
<comment type="function">
    <text evidence="1">One of the primary rRNA binding proteins, it binds directly to 16S rRNA where it nucleates assembly of the body of the 30S subunit.</text>
</comment>
<comment type="function">
    <text evidence="1">With S5 and S12 plays an important role in translational accuracy.</text>
</comment>
<comment type="subunit">
    <text evidence="1">Part of the 30S ribosomal subunit. Contacts protein S5. The interaction surface between S4 and S5 is involved in control of translational fidelity.</text>
</comment>
<comment type="similarity">
    <text evidence="1">Belongs to the universal ribosomal protein uS4 family.</text>
</comment>
<dbReference type="EMBL" id="AE016826">
    <property type="protein sequence ID" value="AAO27149.1"/>
    <property type="molecule type" value="Genomic_DNA"/>
</dbReference>
<dbReference type="RefSeq" id="WP_011091550.1">
    <property type="nucleotide sequence ID" value="NC_004545.1"/>
</dbReference>
<dbReference type="SMR" id="P59491"/>
<dbReference type="STRING" id="224915.bbp_443"/>
<dbReference type="KEGG" id="bab:bbp_443"/>
<dbReference type="eggNOG" id="COG0522">
    <property type="taxonomic scope" value="Bacteria"/>
</dbReference>
<dbReference type="HOGENOM" id="CLU_092403_0_2_6"/>
<dbReference type="OrthoDB" id="9803672at2"/>
<dbReference type="Proteomes" id="UP000000601">
    <property type="component" value="Chromosome"/>
</dbReference>
<dbReference type="GO" id="GO:0015935">
    <property type="term" value="C:small ribosomal subunit"/>
    <property type="evidence" value="ECO:0007669"/>
    <property type="project" value="InterPro"/>
</dbReference>
<dbReference type="GO" id="GO:0019843">
    <property type="term" value="F:rRNA binding"/>
    <property type="evidence" value="ECO:0007669"/>
    <property type="project" value="UniProtKB-UniRule"/>
</dbReference>
<dbReference type="GO" id="GO:0003735">
    <property type="term" value="F:structural constituent of ribosome"/>
    <property type="evidence" value="ECO:0007669"/>
    <property type="project" value="InterPro"/>
</dbReference>
<dbReference type="GO" id="GO:0042274">
    <property type="term" value="P:ribosomal small subunit biogenesis"/>
    <property type="evidence" value="ECO:0007669"/>
    <property type="project" value="TreeGrafter"/>
</dbReference>
<dbReference type="GO" id="GO:0006412">
    <property type="term" value="P:translation"/>
    <property type="evidence" value="ECO:0007669"/>
    <property type="project" value="UniProtKB-UniRule"/>
</dbReference>
<dbReference type="CDD" id="cd00165">
    <property type="entry name" value="S4"/>
    <property type="match status" value="1"/>
</dbReference>
<dbReference type="FunFam" id="1.10.1050.10:FF:000001">
    <property type="entry name" value="30S ribosomal protein S4"/>
    <property type="match status" value="1"/>
</dbReference>
<dbReference type="FunFam" id="3.10.290.10:FF:000001">
    <property type="entry name" value="30S ribosomal protein S4"/>
    <property type="match status" value="1"/>
</dbReference>
<dbReference type="Gene3D" id="1.10.1050.10">
    <property type="entry name" value="Ribosomal Protein S4 Delta 41, Chain A, domain 1"/>
    <property type="match status" value="1"/>
</dbReference>
<dbReference type="Gene3D" id="3.10.290.10">
    <property type="entry name" value="RNA-binding S4 domain"/>
    <property type="match status" value="1"/>
</dbReference>
<dbReference type="HAMAP" id="MF_01306_B">
    <property type="entry name" value="Ribosomal_uS4_B"/>
    <property type="match status" value="1"/>
</dbReference>
<dbReference type="InterPro" id="IPR022801">
    <property type="entry name" value="Ribosomal_uS4"/>
</dbReference>
<dbReference type="InterPro" id="IPR005709">
    <property type="entry name" value="Ribosomal_uS4_bac-type"/>
</dbReference>
<dbReference type="InterPro" id="IPR001912">
    <property type="entry name" value="Ribosomal_uS4_N"/>
</dbReference>
<dbReference type="InterPro" id="IPR002942">
    <property type="entry name" value="S4_RNA-bd"/>
</dbReference>
<dbReference type="InterPro" id="IPR036986">
    <property type="entry name" value="S4_RNA-bd_sf"/>
</dbReference>
<dbReference type="NCBIfam" id="NF003717">
    <property type="entry name" value="PRK05327.1"/>
    <property type="match status" value="1"/>
</dbReference>
<dbReference type="NCBIfam" id="TIGR01017">
    <property type="entry name" value="rpsD_bact"/>
    <property type="match status" value="1"/>
</dbReference>
<dbReference type="PANTHER" id="PTHR11831">
    <property type="entry name" value="30S 40S RIBOSOMAL PROTEIN"/>
    <property type="match status" value="1"/>
</dbReference>
<dbReference type="PANTHER" id="PTHR11831:SF4">
    <property type="entry name" value="SMALL RIBOSOMAL SUBUNIT PROTEIN US4M"/>
    <property type="match status" value="1"/>
</dbReference>
<dbReference type="Pfam" id="PF00163">
    <property type="entry name" value="Ribosomal_S4"/>
    <property type="match status" value="1"/>
</dbReference>
<dbReference type="Pfam" id="PF01479">
    <property type="entry name" value="S4"/>
    <property type="match status" value="1"/>
</dbReference>
<dbReference type="SMART" id="SM01390">
    <property type="entry name" value="Ribosomal_S4"/>
    <property type="match status" value="1"/>
</dbReference>
<dbReference type="SMART" id="SM00363">
    <property type="entry name" value="S4"/>
    <property type="match status" value="1"/>
</dbReference>
<dbReference type="SUPFAM" id="SSF55174">
    <property type="entry name" value="Alpha-L RNA-binding motif"/>
    <property type="match status" value="1"/>
</dbReference>
<dbReference type="PROSITE" id="PS50889">
    <property type="entry name" value="S4"/>
    <property type="match status" value="1"/>
</dbReference>
<organism>
    <name type="scientific">Buchnera aphidicola subsp. Baizongia pistaciae (strain Bp)</name>
    <dbReference type="NCBI Taxonomy" id="224915"/>
    <lineage>
        <taxon>Bacteria</taxon>
        <taxon>Pseudomonadati</taxon>
        <taxon>Pseudomonadota</taxon>
        <taxon>Gammaproteobacteria</taxon>
        <taxon>Enterobacterales</taxon>
        <taxon>Erwiniaceae</taxon>
        <taxon>Buchnera</taxon>
    </lineage>
</organism>
<keyword id="KW-1185">Reference proteome</keyword>
<keyword id="KW-0687">Ribonucleoprotein</keyword>
<keyword id="KW-0689">Ribosomal protein</keyword>
<keyword id="KW-0694">RNA-binding</keyword>
<keyword id="KW-0699">rRNA-binding</keyword>
<proteinExistence type="inferred from homology"/>
<accession>P59491</accession>
<evidence type="ECO:0000255" key="1">
    <source>
        <dbReference type="HAMAP-Rule" id="MF_01306"/>
    </source>
</evidence>
<evidence type="ECO:0000305" key="2"/>